<evidence type="ECO:0000255" key="1">
    <source>
        <dbReference type="HAMAP-Rule" id="MF_00015"/>
    </source>
</evidence>
<keyword id="KW-0068">Autocatalytic cleavage</keyword>
<keyword id="KW-0227">DNA damage</keyword>
<keyword id="KW-0234">DNA repair</keyword>
<keyword id="KW-0235">DNA replication</keyword>
<keyword id="KW-0238">DNA-binding</keyword>
<keyword id="KW-0378">Hydrolase</keyword>
<keyword id="KW-1185">Reference proteome</keyword>
<keyword id="KW-0678">Repressor</keyword>
<keyword id="KW-0742">SOS response</keyword>
<keyword id="KW-0804">Transcription</keyword>
<keyword id="KW-0805">Transcription regulation</keyword>
<gene>
    <name evidence="1" type="primary">lexA</name>
    <name type="ordered locus">ZMO0199</name>
</gene>
<name>LEXA_ZYMMO</name>
<organism>
    <name type="scientific">Zymomonas mobilis subsp. mobilis (strain ATCC 31821 / ZM4 / CP4)</name>
    <dbReference type="NCBI Taxonomy" id="264203"/>
    <lineage>
        <taxon>Bacteria</taxon>
        <taxon>Pseudomonadati</taxon>
        <taxon>Pseudomonadota</taxon>
        <taxon>Alphaproteobacteria</taxon>
        <taxon>Sphingomonadales</taxon>
        <taxon>Zymomonadaceae</taxon>
        <taxon>Zymomonas</taxon>
    </lineage>
</organism>
<accession>Q5NR31</accession>
<protein>
    <recommendedName>
        <fullName evidence="1">LexA repressor</fullName>
        <ecNumber evidence="1">3.4.21.88</ecNumber>
    </recommendedName>
</protein>
<sequence length="217" mass="24358">MLTRKQHDLLLFIHNRLSVSGISPSFEEMKLALDLKSKSGIHRLIKALEERGFIRRLPNRARALEVIRLPEDKTEIQKKISRDYTPPKADNDVIEIPLHGRIAAGLPIEALEGQSHLAVPPSYLGSGAHYALEVAGDSMVDAGIFDGDYIIVRQTDEAHEGEIVVALIDNSDATLKYFHREGRMVRLDPANRAYAPMRYDASRIGIQGRLVGLLRRY</sequence>
<reference key="1">
    <citation type="journal article" date="2005" name="Nat. Biotechnol.">
        <title>The genome sequence of the ethanologenic bacterium Zymomonas mobilis ZM4.</title>
        <authorList>
            <person name="Seo J.-S."/>
            <person name="Chong H."/>
            <person name="Park H.S."/>
            <person name="Yoon K.-O."/>
            <person name="Jung C."/>
            <person name="Kim J.J."/>
            <person name="Hong J.H."/>
            <person name="Kim H."/>
            <person name="Kim J.-H."/>
            <person name="Kil J.-I."/>
            <person name="Park C.J."/>
            <person name="Oh H.-M."/>
            <person name="Lee J.-S."/>
            <person name="Jin S.-J."/>
            <person name="Um H.-W."/>
            <person name="Lee H.-J."/>
            <person name="Oh S.-J."/>
            <person name="Kim J.Y."/>
            <person name="Kang H.L."/>
            <person name="Lee S.Y."/>
            <person name="Lee K.J."/>
            <person name="Kang H.S."/>
        </authorList>
    </citation>
    <scope>NUCLEOTIDE SEQUENCE [LARGE SCALE GENOMIC DNA]</scope>
    <source>
        <strain>ATCC 31821 / ZM4 / CP4</strain>
    </source>
</reference>
<dbReference type="EC" id="3.4.21.88" evidence="1"/>
<dbReference type="EMBL" id="AE008692">
    <property type="protein sequence ID" value="AAV88823.1"/>
    <property type="molecule type" value="Genomic_DNA"/>
</dbReference>
<dbReference type="RefSeq" id="WP_011240150.1">
    <property type="nucleotide sequence ID" value="NZ_CP035711.1"/>
</dbReference>
<dbReference type="SMR" id="Q5NR31"/>
<dbReference type="STRING" id="264203.ZMO0199"/>
<dbReference type="MEROPS" id="S24.001"/>
<dbReference type="KEGG" id="zmo:ZMO0199"/>
<dbReference type="eggNOG" id="COG1974">
    <property type="taxonomic scope" value="Bacteria"/>
</dbReference>
<dbReference type="HOGENOM" id="CLU_066192_45_2_5"/>
<dbReference type="Proteomes" id="UP000001173">
    <property type="component" value="Chromosome"/>
</dbReference>
<dbReference type="GO" id="GO:0003677">
    <property type="term" value="F:DNA binding"/>
    <property type="evidence" value="ECO:0007669"/>
    <property type="project" value="UniProtKB-UniRule"/>
</dbReference>
<dbReference type="GO" id="GO:0004252">
    <property type="term" value="F:serine-type endopeptidase activity"/>
    <property type="evidence" value="ECO:0007669"/>
    <property type="project" value="UniProtKB-UniRule"/>
</dbReference>
<dbReference type="GO" id="GO:0006281">
    <property type="term" value="P:DNA repair"/>
    <property type="evidence" value="ECO:0007669"/>
    <property type="project" value="UniProtKB-UniRule"/>
</dbReference>
<dbReference type="GO" id="GO:0006260">
    <property type="term" value="P:DNA replication"/>
    <property type="evidence" value="ECO:0007669"/>
    <property type="project" value="UniProtKB-UniRule"/>
</dbReference>
<dbReference type="GO" id="GO:0045892">
    <property type="term" value="P:negative regulation of DNA-templated transcription"/>
    <property type="evidence" value="ECO:0007669"/>
    <property type="project" value="UniProtKB-UniRule"/>
</dbReference>
<dbReference type="GO" id="GO:0006508">
    <property type="term" value="P:proteolysis"/>
    <property type="evidence" value="ECO:0007669"/>
    <property type="project" value="InterPro"/>
</dbReference>
<dbReference type="GO" id="GO:0009432">
    <property type="term" value="P:SOS response"/>
    <property type="evidence" value="ECO:0007669"/>
    <property type="project" value="UniProtKB-UniRule"/>
</dbReference>
<dbReference type="CDD" id="cd06529">
    <property type="entry name" value="S24_LexA-like"/>
    <property type="match status" value="1"/>
</dbReference>
<dbReference type="FunFam" id="2.10.109.10:FF:000001">
    <property type="entry name" value="LexA repressor"/>
    <property type="match status" value="1"/>
</dbReference>
<dbReference type="Gene3D" id="2.10.109.10">
    <property type="entry name" value="Umud Fragment, subunit A"/>
    <property type="match status" value="1"/>
</dbReference>
<dbReference type="Gene3D" id="1.10.10.10">
    <property type="entry name" value="Winged helix-like DNA-binding domain superfamily/Winged helix DNA-binding domain"/>
    <property type="match status" value="1"/>
</dbReference>
<dbReference type="HAMAP" id="MF_00015">
    <property type="entry name" value="LexA"/>
    <property type="match status" value="1"/>
</dbReference>
<dbReference type="InterPro" id="IPR006200">
    <property type="entry name" value="LexA"/>
</dbReference>
<dbReference type="InterPro" id="IPR039418">
    <property type="entry name" value="LexA-like"/>
</dbReference>
<dbReference type="InterPro" id="IPR036286">
    <property type="entry name" value="LexA/Signal_pep-like_sf"/>
</dbReference>
<dbReference type="InterPro" id="IPR006199">
    <property type="entry name" value="LexA_DNA-bd_dom"/>
</dbReference>
<dbReference type="InterPro" id="IPR050077">
    <property type="entry name" value="LexA_repressor"/>
</dbReference>
<dbReference type="InterPro" id="IPR006197">
    <property type="entry name" value="Peptidase_S24_LexA"/>
</dbReference>
<dbReference type="InterPro" id="IPR015927">
    <property type="entry name" value="Peptidase_S24_S26A/B/C"/>
</dbReference>
<dbReference type="InterPro" id="IPR036388">
    <property type="entry name" value="WH-like_DNA-bd_sf"/>
</dbReference>
<dbReference type="InterPro" id="IPR036390">
    <property type="entry name" value="WH_DNA-bd_sf"/>
</dbReference>
<dbReference type="NCBIfam" id="TIGR00498">
    <property type="entry name" value="lexA"/>
    <property type="match status" value="1"/>
</dbReference>
<dbReference type="PANTHER" id="PTHR33516">
    <property type="entry name" value="LEXA REPRESSOR"/>
    <property type="match status" value="1"/>
</dbReference>
<dbReference type="PANTHER" id="PTHR33516:SF2">
    <property type="entry name" value="LEXA REPRESSOR-RELATED"/>
    <property type="match status" value="1"/>
</dbReference>
<dbReference type="Pfam" id="PF01726">
    <property type="entry name" value="LexA_DNA_bind"/>
    <property type="match status" value="1"/>
</dbReference>
<dbReference type="Pfam" id="PF00717">
    <property type="entry name" value="Peptidase_S24"/>
    <property type="match status" value="1"/>
</dbReference>
<dbReference type="PRINTS" id="PR00726">
    <property type="entry name" value="LEXASERPTASE"/>
</dbReference>
<dbReference type="SUPFAM" id="SSF51306">
    <property type="entry name" value="LexA/Signal peptidase"/>
    <property type="match status" value="1"/>
</dbReference>
<dbReference type="SUPFAM" id="SSF46785">
    <property type="entry name" value="Winged helix' DNA-binding domain"/>
    <property type="match status" value="1"/>
</dbReference>
<feature type="chain" id="PRO_0000170117" description="LexA repressor">
    <location>
        <begin position="1"/>
        <end position="217"/>
    </location>
</feature>
<feature type="DNA-binding region" description="H-T-H motif" evidence="1">
    <location>
        <begin position="26"/>
        <end position="46"/>
    </location>
</feature>
<feature type="active site" description="For autocatalytic cleavage activity" evidence="1">
    <location>
        <position position="138"/>
    </location>
</feature>
<feature type="active site" description="For autocatalytic cleavage activity" evidence="1">
    <location>
        <position position="176"/>
    </location>
</feature>
<feature type="site" description="Cleavage; by autolysis" evidence="1">
    <location>
        <begin position="104"/>
        <end position="105"/>
    </location>
</feature>
<comment type="function">
    <text evidence="1">Represses a number of genes involved in the response to DNA damage (SOS response), including recA and lexA. In the presence of single-stranded DNA, RecA interacts with LexA causing an autocatalytic cleavage which disrupts the DNA-binding part of LexA, leading to derepression of the SOS regulon and eventually DNA repair.</text>
</comment>
<comment type="catalytic activity">
    <reaction evidence="1">
        <text>Hydrolysis of Ala-|-Gly bond in repressor LexA.</text>
        <dbReference type="EC" id="3.4.21.88"/>
    </reaction>
</comment>
<comment type="subunit">
    <text evidence="1">Homodimer.</text>
</comment>
<comment type="similarity">
    <text evidence="1">Belongs to the peptidase S24 family.</text>
</comment>
<proteinExistence type="inferred from homology"/>